<name>Y142_METJA</name>
<reference key="1">
    <citation type="journal article" date="1996" name="Science">
        <title>Complete genome sequence of the methanogenic archaeon, Methanococcus jannaschii.</title>
        <authorList>
            <person name="Bult C.J."/>
            <person name="White O."/>
            <person name="Olsen G.J."/>
            <person name="Zhou L."/>
            <person name="Fleischmann R.D."/>
            <person name="Sutton G.G."/>
            <person name="Blake J.A."/>
            <person name="FitzGerald L.M."/>
            <person name="Clayton R.A."/>
            <person name="Gocayne J.D."/>
            <person name="Kerlavage A.R."/>
            <person name="Dougherty B.A."/>
            <person name="Tomb J.-F."/>
            <person name="Adams M.D."/>
            <person name="Reich C.I."/>
            <person name="Overbeek R."/>
            <person name="Kirkness E.F."/>
            <person name="Weinstock K.G."/>
            <person name="Merrick J.M."/>
            <person name="Glodek A."/>
            <person name="Scott J.L."/>
            <person name="Geoghagen N.S.M."/>
            <person name="Weidman J.F."/>
            <person name="Fuhrmann J.L."/>
            <person name="Nguyen D."/>
            <person name="Utterback T.R."/>
            <person name="Kelley J.M."/>
            <person name="Peterson J.D."/>
            <person name="Sadow P.W."/>
            <person name="Hanna M.C."/>
            <person name="Cotton M.D."/>
            <person name="Roberts K.M."/>
            <person name="Hurst M.A."/>
            <person name="Kaine B.P."/>
            <person name="Borodovsky M."/>
            <person name="Klenk H.-P."/>
            <person name="Fraser C.M."/>
            <person name="Smith H.O."/>
            <person name="Woese C.R."/>
            <person name="Venter J.C."/>
        </authorList>
    </citation>
    <scope>NUCLEOTIDE SEQUENCE [LARGE SCALE GENOMIC DNA]</scope>
    <source>
        <strain>ATCC 43067 / DSM 2661 / JAL-1 / JCM 10045 / NBRC 100440</strain>
    </source>
</reference>
<dbReference type="EMBL" id="L77117">
    <property type="protein sequence ID" value="AAB98125.1"/>
    <property type="molecule type" value="Genomic_DNA"/>
</dbReference>
<dbReference type="PIR" id="G64317">
    <property type="entry name" value="G64317"/>
</dbReference>
<dbReference type="SMR" id="Q57607"/>
<dbReference type="STRING" id="243232.MJ_0142"/>
<dbReference type="PaxDb" id="243232-MJ_0142"/>
<dbReference type="EnsemblBacteria" id="AAB98125">
    <property type="protein sequence ID" value="AAB98125"/>
    <property type="gene ID" value="MJ_0142"/>
</dbReference>
<dbReference type="KEGG" id="mja:MJ_0142"/>
<dbReference type="eggNOG" id="arCOG02123">
    <property type="taxonomic scope" value="Archaea"/>
</dbReference>
<dbReference type="HOGENOM" id="CLU_151247_1_0_2"/>
<dbReference type="InParanoid" id="Q57607"/>
<dbReference type="OrthoDB" id="101012at2157"/>
<dbReference type="PhylomeDB" id="Q57607"/>
<dbReference type="Proteomes" id="UP000000805">
    <property type="component" value="Chromosome"/>
</dbReference>
<dbReference type="Gene3D" id="1.20.120.330">
    <property type="entry name" value="Nucleotidyltransferases domain 2"/>
    <property type="match status" value="1"/>
</dbReference>
<dbReference type="InterPro" id="IPR007842">
    <property type="entry name" value="HEPN_dom"/>
</dbReference>
<dbReference type="InterPro" id="IPR052226">
    <property type="entry name" value="UPF0332_toxin"/>
</dbReference>
<dbReference type="PANTHER" id="PTHR36565">
    <property type="entry name" value="UPF0332 PROTEIN TM_1000"/>
    <property type="match status" value="1"/>
</dbReference>
<dbReference type="PANTHER" id="PTHR36565:SF1">
    <property type="entry name" value="UPF0332 PROTEIN TM_1000"/>
    <property type="match status" value="1"/>
</dbReference>
<dbReference type="Pfam" id="PF05168">
    <property type="entry name" value="HEPN"/>
    <property type="match status" value="1"/>
</dbReference>
<dbReference type="SUPFAM" id="SSF81593">
    <property type="entry name" value="Nucleotidyltransferase substrate binding subunit/domain"/>
    <property type="match status" value="1"/>
</dbReference>
<gene>
    <name type="ordered locus">MJ0142</name>
</gene>
<evidence type="ECO:0000305" key="1"/>
<protein>
    <recommendedName>
        <fullName>Putative toxin MJ0142</fullName>
    </recommendedName>
    <alternativeName>
        <fullName>UPF0332 protein MJ0142</fullName>
    </alternativeName>
</protein>
<keyword id="KW-1185">Reference proteome</keyword>
<keyword id="KW-1277">Toxin-antitoxin system</keyword>
<sequence length="147" mass="17592">MRLKIMELRYKRELEKLIEKAEKSLEASENLYNSEFYDFAVSRIYYSMFYCVKALLLTKEINPKKHSGVLKMFAKEFIKTNELDVELFEYINEAYNYRQTADYDATIEIKKEEAEYLLHKGHIFLNKTKKYLISKNILKGENDNTKS</sequence>
<feature type="chain" id="PRO_0000159639" description="Putative toxin MJ0142">
    <location>
        <begin position="1"/>
        <end position="147"/>
    </location>
</feature>
<comment type="function">
    <text evidence="1">Putative toxin component of a putative type VII toxin-antitoxin (TA) system. Its cognate antitoxin might be MJ0141.</text>
</comment>
<comment type="similarity">
    <text evidence="1">Belongs to the UPF0332 family.</text>
</comment>
<organism>
    <name type="scientific">Methanocaldococcus jannaschii (strain ATCC 43067 / DSM 2661 / JAL-1 / JCM 10045 / NBRC 100440)</name>
    <name type="common">Methanococcus jannaschii</name>
    <dbReference type="NCBI Taxonomy" id="243232"/>
    <lineage>
        <taxon>Archaea</taxon>
        <taxon>Methanobacteriati</taxon>
        <taxon>Methanobacteriota</taxon>
        <taxon>Methanomada group</taxon>
        <taxon>Methanococci</taxon>
        <taxon>Methanococcales</taxon>
        <taxon>Methanocaldococcaceae</taxon>
        <taxon>Methanocaldococcus</taxon>
    </lineage>
</organism>
<accession>Q57607</accession>
<proteinExistence type="inferred from homology"/>